<dbReference type="EMBL" id="AC002338">
    <property type="protein sequence ID" value="AAC16933.1"/>
    <property type="status" value="ALT_SEQ"/>
    <property type="molecule type" value="Genomic_DNA"/>
</dbReference>
<dbReference type="EMBL" id="CP002685">
    <property type="protein sequence ID" value="AEC08365.1"/>
    <property type="molecule type" value="Genomic_DNA"/>
</dbReference>
<dbReference type="EMBL" id="AK117472">
    <property type="protein sequence ID" value="BAC42136.1"/>
    <property type="molecule type" value="mRNA"/>
</dbReference>
<dbReference type="EMBL" id="BT005437">
    <property type="protein sequence ID" value="AAO63857.1"/>
    <property type="molecule type" value="mRNA"/>
</dbReference>
<dbReference type="PIR" id="E84706">
    <property type="entry name" value="E84706"/>
</dbReference>
<dbReference type="RefSeq" id="NP_180587.2">
    <property type="nucleotide sequence ID" value="NM_128581.4"/>
</dbReference>
<dbReference type="BioGRID" id="2927">
    <property type="interactions" value="1"/>
</dbReference>
<dbReference type="FunCoup" id="Q8GYP3">
    <property type="interactions" value="573"/>
</dbReference>
<dbReference type="STRING" id="3702.Q8GYP3"/>
<dbReference type="iPTMnet" id="Q8GYP3"/>
<dbReference type="PaxDb" id="3702-AT2G30280.1"/>
<dbReference type="ProteomicsDB" id="235076"/>
<dbReference type="EnsemblPlants" id="AT2G30280.1">
    <property type="protein sequence ID" value="AT2G30280.1"/>
    <property type="gene ID" value="AT2G30280"/>
</dbReference>
<dbReference type="GeneID" id="817578"/>
<dbReference type="Gramene" id="AT2G30280.1">
    <property type="protein sequence ID" value="AT2G30280.1"/>
    <property type="gene ID" value="AT2G30280"/>
</dbReference>
<dbReference type="KEGG" id="ath:AT2G30280"/>
<dbReference type="Araport" id="AT2G30280"/>
<dbReference type="TAIR" id="AT2G30280">
    <property type="gene designation" value="RDM4"/>
</dbReference>
<dbReference type="eggNOG" id="ENOG502QS78">
    <property type="taxonomic scope" value="Eukaryota"/>
</dbReference>
<dbReference type="HOGENOM" id="CLU_067940_0_0_1"/>
<dbReference type="InParanoid" id="Q8GYP3"/>
<dbReference type="OMA" id="NPFPLVQ"/>
<dbReference type="PhylomeDB" id="Q8GYP3"/>
<dbReference type="PRO" id="PR:Q8GYP3"/>
<dbReference type="Proteomes" id="UP000006548">
    <property type="component" value="Chromosome 2"/>
</dbReference>
<dbReference type="ExpressionAtlas" id="Q8GYP3">
    <property type="expression patterns" value="baseline and differential"/>
</dbReference>
<dbReference type="GO" id="GO:0003700">
    <property type="term" value="F:DNA-binding transcription factor activity"/>
    <property type="evidence" value="ECO:0000315"/>
    <property type="project" value="TAIR"/>
</dbReference>
<dbReference type="GO" id="GO:0009791">
    <property type="term" value="P:post-embryonic development"/>
    <property type="evidence" value="ECO:0000315"/>
    <property type="project" value="TAIR"/>
</dbReference>
<dbReference type="GO" id="GO:0006355">
    <property type="term" value="P:regulation of DNA-templated transcription"/>
    <property type="evidence" value="ECO:0000316"/>
    <property type="project" value="TAIR"/>
</dbReference>
<dbReference type="GO" id="GO:0031047">
    <property type="term" value="P:regulatory ncRNA-mediated gene silencing"/>
    <property type="evidence" value="ECO:0007669"/>
    <property type="project" value="UniProtKB-KW"/>
</dbReference>
<dbReference type="InterPro" id="IPR013883">
    <property type="entry name" value="TF_Iwr1_dom"/>
</dbReference>
<dbReference type="PANTHER" id="PTHR31934">
    <property type="entry name" value="ALPHA/BETA-HYDROLASES SUPERFAMILY PROTEIN"/>
    <property type="match status" value="1"/>
</dbReference>
<dbReference type="PANTHER" id="PTHR31934:SF2">
    <property type="entry name" value="RNA-DIRECTED DNA METHYLATION 4"/>
    <property type="match status" value="1"/>
</dbReference>
<dbReference type="Pfam" id="PF08574">
    <property type="entry name" value="Iwr1"/>
    <property type="match status" value="1"/>
</dbReference>
<protein>
    <recommendedName>
        <fullName>RNA-directed DNA methylation 4</fullName>
    </recommendedName>
    <alternativeName>
        <fullName>Protein DEFECTIVE IN MERISTEM SILENCING 4</fullName>
    </alternativeName>
</protein>
<gene>
    <name type="primary">RDM4</name>
    <name type="synonym">DMS4</name>
    <name type="ordered locus">At2g30280</name>
    <name type="ORF">T9D9.9</name>
</gene>
<organism>
    <name type="scientific">Arabidopsis thaliana</name>
    <name type="common">Mouse-ear cress</name>
    <dbReference type="NCBI Taxonomy" id="3702"/>
    <lineage>
        <taxon>Eukaryota</taxon>
        <taxon>Viridiplantae</taxon>
        <taxon>Streptophyta</taxon>
        <taxon>Embryophyta</taxon>
        <taxon>Tracheophyta</taxon>
        <taxon>Spermatophyta</taxon>
        <taxon>Magnoliopsida</taxon>
        <taxon>eudicotyledons</taxon>
        <taxon>Gunneridae</taxon>
        <taxon>Pentapetalae</taxon>
        <taxon>rosids</taxon>
        <taxon>malvids</taxon>
        <taxon>Brassicales</taxon>
        <taxon>Brassicaceae</taxon>
        <taxon>Camelineae</taxon>
        <taxon>Arabidopsis</taxon>
    </lineage>
</organism>
<sequence>MDGVGESSTQNEVEEKPVIVRVKRKVGQSLLDAFWLEINERPLKRPTLDFSKLSISDSGERGPSVAEDVKPKKVLVRHLETVTDSETTADIIHSFFESDHNEKSCSKGKFEERKIAFKKDNRKEQRLTKSVQKQQIASENARFEQIWRSRKGNKEGIHEKCHFFDVIRVDTEERRDNAQEFTSLEDQKMLASFLPLLRECIPTAAEEIEADIQSSHTEEYVYDYYAVNEEMDISEDSSKNQFPLVIVEDEEEFCDGSDESDYDSEDSNAEDHPKTDYPEEEEEEEEEDDDDDDDDESEEEKSEASDESDDEETSKRHVRSVLGDDEFDDYAEDVYGYSESDEEFES</sequence>
<feature type="chain" id="PRO_0000423312" description="RNA-directed DNA methylation 4">
    <location>
        <begin position="1"/>
        <end position="346"/>
    </location>
</feature>
<feature type="region of interest" description="Disordered" evidence="1">
    <location>
        <begin position="253"/>
        <end position="346"/>
    </location>
</feature>
<feature type="compositionally biased region" description="Acidic residues" evidence="1">
    <location>
        <begin position="253"/>
        <end position="268"/>
    </location>
</feature>
<feature type="compositionally biased region" description="Acidic residues" evidence="1">
    <location>
        <begin position="278"/>
        <end position="312"/>
    </location>
</feature>
<feature type="compositionally biased region" description="Acidic residues" evidence="1">
    <location>
        <begin position="323"/>
        <end position="332"/>
    </location>
</feature>
<feature type="modified residue" description="N-acetylmethionine" evidence="6">
    <location>
        <position position="1"/>
    </location>
</feature>
<name>RDM4_ARATH</name>
<reference key="1">
    <citation type="journal article" date="1999" name="Nature">
        <title>Sequence and analysis of chromosome 2 of the plant Arabidopsis thaliana.</title>
        <authorList>
            <person name="Lin X."/>
            <person name="Kaul S."/>
            <person name="Rounsley S.D."/>
            <person name="Shea T.P."/>
            <person name="Benito M.-I."/>
            <person name="Town C.D."/>
            <person name="Fujii C.Y."/>
            <person name="Mason T.M."/>
            <person name="Bowman C.L."/>
            <person name="Barnstead M.E."/>
            <person name="Feldblyum T.V."/>
            <person name="Buell C.R."/>
            <person name="Ketchum K.A."/>
            <person name="Lee J.J."/>
            <person name="Ronning C.M."/>
            <person name="Koo H.L."/>
            <person name="Moffat K.S."/>
            <person name="Cronin L.A."/>
            <person name="Shen M."/>
            <person name="Pai G."/>
            <person name="Van Aken S."/>
            <person name="Umayam L."/>
            <person name="Tallon L.J."/>
            <person name="Gill J.E."/>
            <person name="Adams M.D."/>
            <person name="Carrera A.J."/>
            <person name="Creasy T.H."/>
            <person name="Goodman H.M."/>
            <person name="Somerville C.R."/>
            <person name="Copenhaver G.P."/>
            <person name="Preuss D."/>
            <person name="Nierman W.C."/>
            <person name="White O."/>
            <person name="Eisen J.A."/>
            <person name="Salzberg S.L."/>
            <person name="Fraser C.M."/>
            <person name="Venter J.C."/>
        </authorList>
    </citation>
    <scope>NUCLEOTIDE SEQUENCE [LARGE SCALE GENOMIC DNA]</scope>
    <source>
        <strain>cv. Columbia</strain>
    </source>
</reference>
<reference key="2">
    <citation type="journal article" date="2017" name="Plant J.">
        <title>Araport11: a complete reannotation of the Arabidopsis thaliana reference genome.</title>
        <authorList>
            <person name="Cheng C.Y."/>
            <person name="Krishnakumar V."/>
            <person name="Chan A.P."/>
            <person name="Thibaud-Nissen F."/>
            <person name="Schobel S."/>
            <person name="Town C.D."/>
        </authorList>
    </citation>
    <scope>GENOME REANNOTATION</scope>
    <source>
        <strain>cv. Columbia</strain>
    </source>
</reference>
<reference key="3">
    <citation type="journal article" date="2002" name="Science">
        <title>Functional annotation of a full-length Arabidopsis cDNA collection.</title>
        <authorList>
            <person name="Seki M."/>
            <person name="Narusaka M."/>
            <person name="Kamiya A."/>
            <person name="Ishida J."/>
            <person name="Satou M."/>
            <person name="Sakurai T."/>
            <person name="Nakajima M."/>
            <person name="Enju A."/>
            <person name="Akiyama K."/>
            <person name="Oono Y."/>
            <person name="Muramatsu M."/>
            <person name="Hayashizaki Y."/>
            <person name="Kawai J."/>
            <person name="Carninci P."/>
            <person name="Itoh M."/>
            <person name="Ishii Y."/>
            <person name="Arakawa T."/>
            <person name="Shibata K."/>
            <person name="Shinagawa A."/>
            <person name="Shinozaki K."/>
        </authorList>
    </citation>
    <scope>NUCLEOTIDE SEQUENCE [LARGE SCALE MRNA]</scope>
    <source>
        <strain>cv. Columbia</strain>
    </source>
</reference>
<reference key="4">
    <citation type="journal article" date="2003" name="Science">
        <title>Empirical analysis of transcriptional activity in the Arabidopsis genome.</title>
        <authorList>
            <person name="Yamada K."/>
            <person name="Lim J."/>
            <person name="Dale J.M."/>
            <person name="Chen H."/>
            <person name="Shinn P."/>
            <person name="Palm C.J."/>
            <person name="Southwick A.M."/>
            <person name="Wu H.C."/>
            <person name="Kim C.J."/>
            <person name="Nguyen M."/>
            <person name="Pham P.K."/>
            <person name="Cheuk R.F."/>
            <person name="Karlin-Newmann G."/>
            <person name="Liu S.X."/>
            <person name="Lam B."/>
            <person name="Sakano H."/>
            <person name="Wu T."/>
            <person name="Yu G."/>
            <person name="Miranda M."/>
            <person name="Quach H.L."/>
            <person name="Tripp M."/>
            <person name="Chang C.H."/>
            <person name="Lee J.M."/>
            <person name="Toriumi M.J."/>
            <person name="Chan M.M."/>
            <person name="Tang C.C."/>
            <person name="Onodera C.S."/>
            <person name="Deng J.M."/>
            <person name="Akiyama K."/>
            <person name="Ansari Y."/>
            <person name="Arakawa T."/>
            <person name="Banh J."/>
            <person name="Banno F."/>
            <person name="Bowser L."/>
            <person name="Brooks S.Y."/>
            <person name="Carninci P."/>
            <person name="Chao Q."/>
            <person name="Choy N."/>
            <person name="Enju A."/>
            <person name="Goldsmith A.D."/>
            <person name="Gurjal M."/>
            <person name="Hansen N.F."/>
            <person name="Hayashizaki Y."/>
            <person name="Johnson-Hopson C."/>
            <person name="Hsuan V.W."/>
            <person name="Iida K."/>
            <person name="Karnes M."/>
            <person name="Khan S."/>
            <person name="Koesema E."/>
            <person name="Ishida J."/>
            <person name="Jiang P.X."/>
            <person name="Jones T."/>
            <person name="Kawai J."/>
            <person name="Kamiya A."/>
            <person name="Meyers C."/>
            <person name="Nakajima M."/>
            <person name="Narusaka M."/>
            <person name="Seki M."/>
            <person name="Sakurai T."/>
            <person name="Satou M."/>
            <person name="Tamse R."/>
            <person name="Vaysberg M."/>
            <person name="Wallender E.K."/>
            <person name="Wong C."/>
            <person name="Yamamura Y."/>
            <person name="Yuan S."/>
            <person name="Shinozaki K."/>
            <person name="Davis R.W."/>
            <person name="Theologis A."/>
            <person name="Ecker J.R."/>
        </authorList>
    </citation>
    <scope>NUCLEOTIDE SEQUENCE [LARGE SCALE MRNA]</scope>
    <source>
        <strain>cv. Columbia</strain>
    </source>
</reference>
<reference key="5">
    <citation type="journal article" date="2009" name="Genes Dev.">
        <title>A conserved transcriptional regulator is required for RNA-directed DNA methylation and plant development.</title>
        <authorList>
            <person name="He X.J."/>
            <person name="Hsu Y.F."/>
            <person name="Zhu S."/>
            <person name="Liu H.L."/>
            <person name="Pontes O."/>
            <person name="Zhu J."/>
            <person name="Cui X."/>
            <person name="Wang C.S."/>
            <person name="Zhu J.K."/>
        </authorList>
    </citation>
    <scope>FUNCTION</scope>
    <scope>DISRUPTION PHENOTYPE</scope>
    <scope>INTERACTION WITH POL II AND POL V COMPLEXES</scope>
</reference>
<reference key="6">
    <citation type="journal article" date="2010" name="EMBO Rep.">
        <title>RNA-directed DNA methylation and plant development require an IWR1-type transcription factor.</title>
        <authorList>
            <person name="Kanno T."/>
            <person name="Bucher E."/>
            <person name="Daxinger L."/>
            <person name="Huettel B."/>
            <person name="Kreil D.P."/>
            <person name="Breinig F."/>
            <person name="Lind M."/>
            <person name="Schmitt M.J."/>
            <person name="Simon S.A."/>
            <person name="Gurazada S.G."/>
            <person name="Meyers B.C."/>
            <person name="Lorkovic Z.J."/>
            <person name="Matzke A.J."/>
            <person name="Matzke M."/>
        </authorList>
    </citation>
    <scope>FUNCTION</scope>
    <scope>DISRUPTION PHENOTYPE</scope>
</reference>
<reference key="7">
    <citation type="journal article" date="2011" name="PLoS Genet.">
        <title>SHH1, a homeodomain protein required for DNA methylation, as well as RDR2, RDM4, and chromatin remodeling factors, associate with RNA polymerase IV.</title>
        <authorList>
            <person name="Law J.A."/>
            <person name="Vashisht A.A."/>
            <person name="Wohlschlegel J.A."/>
            <person name="Jacobsen S.E."/>
        </authorList>
    </citation>
    <scope>IDENTIFICATION BY MASS SPECTROMETRY</scope>
    <scope>INTERACTION WITH NRPD1</scope>
</reference>
<reference key="8">
    <citation type="journal article" date="2012" name="Mol. Cell. Proteomics">
        <title>Comparative large-scale characterisation of plant vs. mammal proteins reveals similar and idiosyncratic N-alpha acetylation features.</title>
        <authorList>
            <person name="Bienvenut W.V."/>
            <person name="Sumpton D."/>
            <person name="Martinez A."/>
            <person name="Lilla S."/>
            <person name="Espagne C."/>
            <person name="Meinnel T."/>
            <person name="Giglione C."/>
        </authorList>
    </citation>
    <scope>ACETYLATION [LARGE SCALE ANALYSIS] AT MET-1</scope>
    <scope>IDENTIFICATION BY MASS SPECTROMETRY [LARGE SCALE ANALYSIS]</scope>
</reference>
<proteinExistence type="evidence at protein level"/>
<evidence type="ECO:0000256" key="1">
    <source>
        <dbReference type="SAM" id="MobiDB-lite"/>
    </source>
</evidence>
<evidence type="ECO:0000269" key="2">
    <source>
    </source>
</evidence>
<evidence type="ECO:0000269" key="3">
    <source>
    </source>
</evidence>
<evidence type="ECO:0000269" key="4">
    <source>
    </source>
</evidence>
<evidence type="ECO:0000305" key="5"/>
<evidence type="ECO:0007744" key="6">
    <source>
    </source>
</evidence>
<keyword id="KW-0007">Acetylation</keyword>
<keyword id="KW-1185">Reference proteome</keyword>
<keyword id="KW-0943">RNA-mediated gene silencing</keyword>
<accession>Q8GYP3</accession>
<accession>O22924</accession>
<comment type="function">
    <text evidence="2 3">Probable regulatory factor for several RNA polymerases. Effector involved in facilitation of Pol V transcription as RNA scaffold and recruitment of silencing complex to target genomic sites.</text>
</comment>
<comment type="subunit">
    <text evidence="2 4">Interacts with NRPD1. Associates with Pol II and Pol V complexes.</text>
</comment>
<comment type="disruption phenotype">
    <text evidence="2 3">Reduced DNA methylation at RdDM target loci and pleiotropic developmental phenotype.</text>
</comment>
<comment type="similarity">
    <text evidence="5">Belongs to the IWR1/SLC7A6OS family.</text>
</comment>
<comment type="sequence caution" evidence="5">
    <conflict type="erroneous gene model prediction">
        <sequence resource="EMBL-CDS" id="AAC16933"/>
    </conflict>
</comment>